<proteinExistence type="inferred from homology"/>
<comment type="catalytic activity">
    <reaction evidence="1">
        <text>CMP + ATP = CDP + ADP</text>
        <dbReference type="Rhea" id="RHEA:11600"/>
        <dbReference type="ChEBI" id="CHEBI:30616"/>
        <dbReference type="ChEBI" id="CHEBI:58069"/>
        <dbReference type="ChEBI" id="CHEBI:60377"/>
        <dbReference type="ChEBI" id="CHEBI:456216"/>
        <dbReference type="EC" id="2.7.4.25"/>
    </reaction>
</comment>
<comment type="catalytic activity">
    <reaction evidence="1">
        <text>dCMP + ATP = dCDP + ADP</text>
        <dbReference type="Rhea" id="RHEA:25094"/>
        <dbReference type="ChEBI" id="CHEBI:30616"/>
        <dbReference type="ChEBI" id="CHEBI:57566"/>
        <dbReference type="ChEBI" id="CHEBI:58593"/>
        <dbReference type="ChEBI" id="CHEBI:456216"/>
        <dbReference type="EC" id="2.7.4.25"/>
    </reaction>
</comment>
<comment type="subcellular location">
    <subcellularLocation>
        <location evidence="1">Cytoplasm</location>
    </subcellularLocation>
</comment>
<comment type="similarity">
    <text evidence="1">Belongs to the cytidylate kinase family. Type 1 subfamily.</text>
</comment>
<name>KCY_BURMA</name>
<organism>
    <name type="scientific">Burkholderia mallei (strain ATCC 23344)</name>
    <dbReference type="NCBI Taxonomy" id="243160"/>
    <lineage>
        <taxon>Bacteria</taxon>
        <taxon>Pseudomonadati</taxon>
        <taxon>Pseudomonadota</taxon>
        <taxon>Betaproteobacteria</taxon>
        <taxon>Burkholderiales</taxon>
        <taxon>Burkholderiaceae</taxon>
        <taxon>Burkholderia</taxon>
        <taxon>pseudomallei group</taxon>
    </lineage>
</organism>
<reference key="1">
    <citation type="journal article" date="2004" name="Proc. Natl. Acad. Sci. U.S.A.">
        <title>Structural flexibility in the Burkholderia mallei genome.</title>
        <authorList>
            <person name="Nierman W.C."/>
            <person name="DeShazer D."/>
            <person name="Kim H.S."/>
            <person name="Tettelin H."/>
            <person name="Nelson K.E."/>
            <person name="Feldblyum T.V."/>
            <person name="Ulrich R.L."/>
            <person name="Ronning C.M."/>
            <person name="Brinkac L.M."/>
            <person name="Daugherty S.C."/>
            <person name="Davidsen T.D."/>
            <person name="DeBoy R.T."/>
            <person name="Dimitrov G."/>
            <person name="Dodson R.J."/>
            <person name="Durkin A.S."/>
            <person name="Gwinn M.L."/>
            <person name="Haft D.H."/>
            <person name="Khouri H.M."/>
            <person name="Kolonay J.F."/>
            <person name="Madupu R."/>
            <person name="Mohammoud Y."/>
            <person name="Nelson W.C."/>
            <person name="Radune D."/>
            <person name="Romero C.M."/>
            <person name="Sarria S."/>
            <person name="Selengut J."/>
            <person name="Shamblin C."/>
            <person name="Sullivan S.A."/>
            <person name="White O."/>
            <person name="Yu Y."/>
            <person name="Zafar N."/>
            <person name="Zhou L."/>
            <person name="Fraser C.M."/>
        </authorList>
    </citation>
    <scope>NUCLEOTIDE SEQUENCE [LARGE SCALE GENOMIC DNA]</scope>
    <source>
        <strain>ATCC 23344</strain>
    </source>
</reference>
<keyword id="KW-0067">ATP-binding</keyword>
<keyword id="KW-0963">Cytoplasm</keyword>
<keyword id="KW-0418">Kinase</keyword>
<keyword id="KW-0547">Nucleotide-binding</keyword>
<keyword id="KW-1185">Reference proteome</keyword>
<keyword id="KW-0808">Transferase</keyword>
<gene>
    <name evidence="1" type="primary">cmk</name>
    <name type="ordered locus">BMA0429</name>
</gene>
<protein>
    <recommendedName>
        <fullName evidence="1">Cytidylate kinase</fullName>
        <shortName evidence="1">CK</shortName>
        <ecNumber evidence="1">2.7.4.25</ecNumber>
    </recommendedName>
    <alternativeName>
        <fullName evidence="1">Cytidine monophosphate kinase</fullName>
        <shortName evidence="1">CMP kinase</shortName>
    </alternativeName>
</protein>
<accession>Q62M26</accession>
<dbReference type="EC" id="2.7.4.25" evidence="1"/>
<dbReference type="EMBL" id="CP000010">
    <property type="protein sequence ID" value="AAU48804.1"/>
    <property type="molecule type" value="Genomic_DNA"/>
</dbReference>
<dbReference type="RefSeq" id="WP_004189396.1">
    <property type="nucleotide sequence ID" value="NC_006348.1"/>
</dbReference>
<dbReference type="RefSeq" id="YP_102242.1">
    <property type="nucleotide sequence ID" value="NC_006348.1"/>
</dbReference>
<dbReference type="SMR" id="Q62M26"/>
<dbReference type="GeneID" id="92978200"/>
<dbReference type="KEGG" id="bma:BMA0429"/>
<dbReference type="PATRIC" id="fig|243160.12.peg.436"/>
<dbReference type="eggNOG" id="COG0283">
    <property type="taxonomic scope" value="Bacteria"/>
</dbReference>
<dbReference type="HOGENOM" id="CLU_079959_2_0_4"/>
<dbReference type="Proteomes" id="UP000006693">
    <property type="component" value="Chromosome 1"/>
</dbReference>
<dbReference type="GO" id="GO:0005829">
    <property type="term" value="C:cytosol"/>
    <property type="evidence" value="ECO:0007669"/>
    <property type="project" value="TreeGrafter"/>
</dbReference>
<dbReference type="GO" id="GO:0005524">
    <property type="term" value="F:ATP binding"/>
    <property type="evidence" value="ECO:0007669"/>
    <property type="project" value="UniProtKB-UniRule"/>
</dbReference>
<dbReference type="GO" id="GO:0036430">
    <property type="term" value="F:CMP kinase activity"/>
    <property type="evidence" value="ECO:0007669"/>
    <property type="project" value="RHEA"/>
</dbReference>
<dbReference type="GO" id="GO:0036431">
    <property type="term" value="F:dCMP kinase activity"/>
    <property type="evidence" value="ECO:0007669"/>
    <property type="project" value="RHEA"/>
</dbReference>
<dbReference type="GO" id="GO:0015949">
    <property type="term" value="P:nucleobase-containing small molecule interconversion"/>
    <property type="evidence" value="ECO:0007669"/>
    <property type="project" value="TreeGrafter"/>
</dbReference>
<dbReference type="GO" id="GO:0006220">
    <property type="term" value="P:pyrimidine nucleotide metabolic process"/>
    <property type="evidence" value="ECO:0007669"/>
    <property type="project" value="UniProtKB-UniRule"/>
</dbReference>
<dbReference type="CDD" id="cd02020">
    <property type="entry name" value="CMPK"/>
    <property type="match status" value="1"/>
</dbReference>
<dbReference type="Gene3D" id="3.40.50.300">
    <property type="entry name" value="P-loop containing nucleotide triphosphate hydrolases"/>
    <property type="match status" value="1"/>
</dbReference>
<dbReference type="HAMAP" id="MF_00238">
    <property type="entry name" value="Cytidyl_kinase_type1"/>
    <property type="match status" value="1"/>
</dbReference>
<dbReference type="InterPro" id="IPR003136">
    <property type="entry name" value="Cytidylate_kin"/>
</dbReference>
<dbReference type="InterPro" id="IPR011994">
    <property type="entry name" value="Cytidylate_kinase_dom"/>
</dbReference>
<dbReference type="InterPro" id="IPR027417">
    <property type="entry name" value="P-loop_NTPase"/>
</dbReference>
<dbReference type="NCBIfam" id="TIGR00017">
    <property type="entry name" value="cmk"/>
    <property type="match status" value="1"/>
</dbReference>
<dbReference type="PANTHER" id="PTHR21299:SF2">
    <property type="entry name" value="CYTIDYLATE KINASE"/>
    <property type="match status" value="1"/>
</dbReference>
<dbReference type="PANTHER" id="PTHR21299">
    <property type="entry name" value="CYTIDYLATE KINASE/PANTOATE-BETA-ALANINE LIGASE"/>
    <property type="match status" value="1"/>
</dbReference>
<dbReference type="Pfam" id="PF02224">
    <property type="entry name" value="Cytidylate_kin"/>
    <property type="match status" value="1"/>
</dbReference>
<dbReference type="SUPFAM" id="SSF52540">
    <property type="entry name" value="P-loop containing nucleoside triphosphate hydrolases"/>
    <property type="match status" value="1"/>
</dbReference>
<sequence length="228" mass="24367">MKSTRPFHPTPVITIDGPTASGKGTVAALVAAHLGFHLLDSGALYRLAALASIRYQVEPDDADALASLVDGLHITFREGCAQLDGVDVSDEIRAEAVGNRASAIAVHASVRAALVARQRAFRKTPGLVADGRDMGTLIFPDAVLKVFLTASVEARAARRHKQLMQKGFSANIDNLLQDLRERDARDSNRAAAPLKPAADAKPLDTSALTIEQSVEQVLAWYRELGQPA</sequence>
<feature type="chain" id="PRO_0000131894" description="Cytidylate kinase">
    <location>
        <begin position="1"/>
        <end position="228"/>
    </location>
</feature>
<feature type="binding site" evidence="1">
    <location>
        <begin position="17"/>
        <end position="25"/>
    </location>
    <ligand>
        <name>ATP</name>
        <dbReference type="ChEBI" id="CHEBI:30616"/>
    </ligand>
</feature>
<evidence type="ECO:0000255" key="1">
    <source>
        <dbReference type="HAMAP-Rule" id="MF_00238"/>
    </source>
</evidence>